<accession>Q1CEH8</accession>
<accession>C4GXY4</accession>
<feature type="chain" id="PRO_0000291705" description="Iron-sulfur cluster repair protein YtfE">
    <location>
        <begin position="1"/>
        <end position="221"/>
    </location>
</feature>
<comment type="function">
    <text evidence="1">Di-iron-containing protein involved in the repair of iron-sulfur clusters damaged by oxidative and nitrosative stress conditions.</text>
</comment>
<comment type="subunit">
    <text evidence="1">Homodimer.</text>
</comment>
<comment type="subcellular location">
    <subcellularLocation>
        <location evidence="1">Cytoplasm</location>
    </subcellularLocation>
</comment>
<comment type="similarity">
    <text evidence="1">Belongs to the RIC family. YtfE subfamily.</text>
</comment>
<keyword id="KW-0963">Cytoplasm</keyword>
<keyword id="KW-0408">Iron</keyword>
<keyword id="KW-0479">Metal-binding</keyword>
<keyword id="KW-0346">Stress response</keyword>
<name>YTFE_YERPN</name>
<gene>
    <name evidence="1" type="primary">ytfE</name>
    <name type="ordered locus">YPN_3275</name>
    <name type="ORF">YP516_3719</name>
</gene>
<dbReference type="EMBL" id="CP000305">
    <property type="protein sequence ID" value="ABG19602.1"/>
    <property type="molecule type" value="Genomic_DNA"/>
</dbReference>
<dbReference type="EMBL" id="ACNQ01000017">
    <property type="protein sequence ID" value="EEO75784.1"/>
    <property type="molecule type" value="Genomic_DNA"/>
</dbReference>
<dbReference type="RefSeq" id="WP_002210159.1">
    <property type="nucleotide sequence ID" value="NZ_ACNQ01000017.1"/>
</dbReference>
<dbReference type="SMR" id="Q1CEH8"/>
<dbReference type="GeneID" id="57975183"/>
<dbReference type="KEGG" id="ypn:YPN_3275"/>
<dbReference type="HOGENOM" id="CLU_076075_2_0_6"/>
<dbReference type="Proteomes" id="UP000008936">
    <property type="component" value="Chromosome"/>
</dbReference>
<dbReference type="GO" id="GO:0005737">
    <property type="term" value="C:cytoplasm"/>
    <property type="evidence" value="ECO:0007669"/>
    <property type="project" value="UniProtKB-SubCell"/>
</dbReference>
<dbReference type="GO" id="GO:0046872">
    <property type="term" value="F:metal ion binding"/>
    <property type="evidence" value="ECO:0007669"/>
    <property type="project" value="UniProtKB-KW"/>
</dbReference>
<dbReference type="GO" id="GO:0030091">
    <property type="term" value="P:protein repair"/>
    <property type="evidence" value="ECO:0007669"/>
    <property type="project" value="UniProtKB-UniRule"/>
</dbReference>
<dbReference type="GO" id="GO:0051409">
    <property type="term" value="P:response to nitrosative stress"/>
    <property type="evidence" value="ECO:0007669"/>
    <property type="project" value="UniProtKB-UniRule"/>
</dbReference>
<dbReference type="GO" id="GO:0006979">
    <property type="term" value="P:response to oxidative stress"/>
    <property type="evidence" value="ECO:0007669"/>
    <property type="project" value="UniProtKB-UniRule"/>
</dbReference>
<dbReference type="CDD" id="cd12108">
    <property type="entry name" value="Hr-like"/>
    <property type="match status" value="1"/>
</dbReference>
<dbReference type="Gene3D" id="1.20.120.520">
    <property type="entry name" value="nmb1532 protein domain like"/>
    <property type="match status" value="1"/>
</dbReference>
<dbReference type="HAMAP" id="MF_01606">
    <property type="entry name" value="RIC_YtfE"/>
    <property type="match status" value="1"/>
</dbReference>
<dbReference type="InterPro" id="IPR023742">
    <property type="entry name" value="FeS-repair_YftE"/>
</dbReference>
<dbReference type="InterPro" id="IPR012312">
    <property type="entry name" value="Hemerythrin-like"/>
</dbReference>
<dbReference type="InterPro" id="IPR019903">
    <property type="entry name" value="RIC_family"/>
</dbReference>
<dbReference type="NCBIfam" id="TIGR03652">
    <property type="entry name" value="FeS_repair_RIC"/>
    <property type="match status" value="1"/>
</dbReference>
<dbReference type="NCBIfam" id="NF008221">
    <property type="entry name" value="PRK10992.1"/>
    <property type="match status" value="1"/>
</dbReference>
<dbReference type="PANTHER" id="PTHR36438">
    <property type="entry name" value="IRON-SULFUR CLUSTER REPAIR PROTEIN YTFE"/>
    <property type="match status" value="1"/>
</dbReference>
<dbReference type="PANTHER" id="PTHR36438:SF1">
    <property type="entry name" value="IRON-SULFUR CLUSTER REPAIR PROTEIN YTFE"/>
    <property type="match status" value="1"/>
</dbReference>
<dbReference type="Pfam" id="PF01814">
    <property type="entry name" value="Hemerythrin"/>
    <property type="match status" value="1"/>
</dbReference>
<dbReference type="Pfam" id="PF04405">
    <property type="entry name" value="ScdA_N"/>
    <property type="match status" value="1"/>
</dbReference>
<protein>
    <recommendedName>
        <fullName evidence="1">Iron-sulfur cluster repair protein YtfE</fullName>
    </recommendedName>
</protein>
<organism>
    <name type="scientific">Yersinia pestis bv. Antiqua (strain Nepal516)</name>
    <dbReference type="NCBI Taxonomy" id="377628"/>
    <lineage>
        <taxon>Bacteria</taxon>
        <taxon>Pseudomonadati</taxon>
        <taxon>Pseudomonadota</taxon>
        <taxon>Gammaproteobacteria</taxon>
        <taxon>Enterobacterales</taxon>
        <taxon>Yersiniaceae</taxon>
        <taxon>Yersinia</taxon>
    </lineage>
</organism>
<sequence length="221" mass="25063">MDYRNQSLGALAIAIPRATKLFRQHQLDFCCGGKQTLLRAANKLNLDIDALEAQLSALQTEPHSSEDWQQQPLTNLISFIISRYHDRHREQLPELVLMAEKVERVHGEKPTCPRGLAAELSAILEELTQHMYKEEQILFPMIQRGMGSQASGPIFVMEAEHDAVGQQLDVVKQLTQNVTPPEGACNTWRALYTGINEFITDLMEHIHLENNLLFPRALRGE</sequence>
<reference key="1">
    <citation type="journal article" date="2006" name="J. Bacteriol.">
        <title>Complete genome sequence of Yersinia pestis strains Antiqua and Nepal516: evidence of gene reduction in an emerging pathogen.</title>
        <authorList>
            <person name="Chain P.S.G."/>
            <person name="Hu P."/>
            <person name="Malfatti S.A."/>
            <person name="Radnedge L."/>
            <person name="Larimer F."/>
            <person name="Vergez L.M."/>
            <person name="Worsham P."/>
            <person name="Chu M.C."/>
            <person name="Andersen G.L."/>
        </authorList>
    </citation>
    <scope>NUCLEOTIDE SEQUENCE [LARGE SCALE GENOMIC DNA]</scope>
    <source>
        <strain>Nepal516</strain>
    </source>
</reference>
<reference key="2">
    <citation type="submission" date="2009-04" db="EMBL/GenBank/DDBJ databases">
        <title>Yersinia pestis Nepal516A whole genome shotgun sequencing project.</title>
        <authorList>
            <person name="Plunkett G. III"/>
            <person name="Anderson B.D."/>
            <person name="Baumler D.J."/>
            <person name="Burland V."/>
            <person name="Cabot E.L."/>
            <person name="Glasner J.D."/>
            <person name="Mau B."/>
            <person name="Neeno-Eckwall E."/>
            <person name="Perna N.T."/>
            <person name="Munk A.C."/>
            <person name="Tapia R."/>
            <person name="Green L.D."/>
            <person name="Rogers Y.C."/>
            <person name="Detter J.C."/>
            <person name="Bruce D.C."/>
            <person name="Brettin T.S."/>
        </authorList>
    </citation>
    <scope>NUCLEOTIDE SEQUENCE [LARGE SCALE GENOMIC DNA]</scope>
    <source>
        <strain>Nepal516</strain>
    </source>
</reference>
<evidence type="ECO:0000255" key="1">
    <source>
        <dbReference type="HAMAP-Rule" id="MF_01606"/>
    </source>
</evidence>
<proteinExistence type="inferred from homology"/>